<organism>
    <name type="scientific">Streptococcus thermophilus (strain ATCC BAA-250 / LMG 18311)</name>
    <dbReference type="NCBI Taxonomy" id="264199"/>
    <lineage>
        <taxon>Bacteria</taxon>
        <taxon>Bacillati</taxon>
        <taxon>Bacillota</taxon>
        <taxon>Bacilli</taxon>
        <taxon>Lactobacillales</taxon>
        <taxon>Streptococcaceae</taxon>
        <taxon>Streptococcus</taxon>
    </lineage>
</organism>
<gene>
    <name type="ordered locus">stu1894</name>
</gene>
<reference key="1">
    <citation type="journal article" date="2004" name="Nat. Biotechnol.">
        <title>Complete sequence and comparative genome analysis of the dairy bacterium Streptococcus thermophilus.</title>
        <authorList>
            <person name="Bolotin A."/>
            <person name="Quinquis B."/>
            <person name="Renault P."/>
            <person name="Sorokin A."/>
            <person name="Ehrlich S.D."/>
            <person name="Kulakauskas S."/>
            <person name="Lapidus A."/>
            <person name="Goltsman E."/>
            <person name="Mazur M."/>
            <person name="Pusch G.D."/>
            <person name="Fonstein M."/>
            <person name="Overbeek R."/>
            <person name="Kyprides N."/>
            <person name="Purnelle B."/>
            <person name="Prozzi D."/>
            <person name="Ngui K."/>
            <person name="Masuy D."/>
            <person name="Hancy F."/>
            <person name="Burteau S."/>
            <person name="Boutry M."/>
            <person name="Delcour J."/>
            <person name="Goffeau A."/>
            <person name="Hols P."/>
        </authorList>
    </citation>
    <scope>NUCLEOTIDE SEQUENCE [LARGE SCALE GENOMIC DNA]</scope>
    <source>
        <strain>ATCC BAA-250 / LMG 18311</strain>
    </source>
</reference>
<evidence type="ECO:0000255" key="1">
    <source>
        <dbReference type="HAMAP-Rule" id="MF_00800"/>
    </source>
</evidence>
<comment type="similarity">
    <text evidence="1">Belongs to the UPF0340 family.</text>
</comment>
<dbReference type="EMBL" id="CP000023">
    <property type="protein sequence ID" value="AAV61493.1"/>
    <property type="molecule type" value="Genomic_DNA"/>
</dbReference>
<dbReference type="SMR" id="Q5M2E4"/>
<dbReference type="STRING" id="264199.stu1894"/>
<dbReference type="KEGG" id="stl:stu1894"/>
<dbReference type="eggNOG" id="COG4475">
    <property type="taxonomic scope" value="Bacteria"/>
</dbReference>
<dbReference type="HOGENOM" id="CLU_106658_0_0_9"/>
<dbReference type="Proteomes" id="UP000001170">
    <property type="component" value="Chromosome"/>
</dbReference>
<dbReference type="Gene3D" id="3.40.50.10360">
    <property type="entry name" value="Hypothetical protein TT1679"/>
    <property type="match status" value="1"/>
</dbReference>
<dbReference type="HAMAP" id="MF_00800">
    <property type="entry name" value="UPF0340"/>
    <property type="match status" value="1"/>
</dbReference>
<dbReference type="InterPro" id="IPR028345">
    <property type="entry name" value="Antibiotic_NAT-like"/>
</dbReference>
<dbReference type="InterPro" id="IPR006340">
    <property type="entry name" value="DUF436"/>
</dbReference>
<dbReference type="NCBIfam" id="TIGR01440">
    <property type="entry name" value="TIGR01440 family protein"/>
    <property type="match status" value="1"/>
</dbReference>
<dbReference type="Pfam" id="PF04260">
    <property type="entry name" value="DUF436"/>
    <property type="match status" value="1"/>
</dbReference>
<dbReference type="PIRSF" id="PIRSF007510">
    <property type="entry name" value="UCP007510"/>
    <property type="match status" value="1"/>
</dbReference>
<dbReference type="SUPFAM" id="SSF110710">
    <property type="entry name" value="TTHA0583/YokD-like"/>
    <property type="match status" value="1"/>
</dbReference>
<name>Y1894_STRT2</name>
<proteinExistence type="inferred from homology"/>
<protein>
    <recommendedName>
        <fullName evidence="1">UPF0340 protein stu1894</fullName>
    </recommendedName>
</protein>
<keyword id="KW-1185">Reference proteome</keyword>
<sequence>MMLLDLEEKTRVLVEDIVERSAIGSGSIFVLGLSSSEVVGGIIGKASSREIGQRIVKTILEVLEPKGIYLAVQGCEHLNRALVVERELALAKDLEIVNVLPTLHAGGSGQLAAFDYMEDPVEVEEILAQAGIDIGDTSIGMHVKRVQVPLRPIISELGGAHVTALASRPKLIGGARAEYLADPIRKN</sequence>
<accession>Q5M2E4</accession>
<feature type="chain" id="PRO_0000213028" description="UPF0340 protein stu1894">
    <location>
        <begin position="1"/>
        <end position="187"/>
    </location>
</feature>